<organism>
    <name type="scientific">Nicotiana tabacum</name>
    <name type="common">Common tobacco</name>
    <dbReference type="NCBI Taxonomy" id="4097"/>
    <lineage>
        <taxon>Eukaryota</taxon>
        <taxon>Viridiplantae</taxon>
        <taxon>Streptophyta</taxon>
        <taxon>Embryophyta</taxon>
        <taxon>Tracheophyta</taxon>
        <taxon>Spermatophyta</taxon>
        <taxon>Magnoliopsida</taxon>
        <taxon>eudicotyledons</taxon>
        <taxon>Gunneridae</taxon>
        <taxon>Pentapetalae</taxon>
        <taxon>asterids</taxon>
        <taxon>lamiids</taxon>
        <taxon>Solanales</taxon>
        <taxon>Solanaceae</taxon>
        <taxon>Nicotianoideae</taxon>
        <taxon>Nicotianeae</taxon>
        <taxon>Nicotiana</taxon>
    </lineage>
</organism>
<sequence>MNIKVSLLFILPIFLLLLTSKVKAGDIVVYWGQDVGEGKLIDTCNSGLYNIVNIAFLSSFGNFQTPKLNLAGHCEPSSGGCQQLTKSIRHCQSIGIKIMLSIGGGTPTYTLSSVDDARQVADYLWNNFLGGQSSFRPLGDAVLDGIDFDIELGQPHYIALARRLSEHGQQGKKLYLTAAPQCPFPDKLLNGALQTGLFDYVWVQFYNNPECEFMSNSENFKRRWNQWTSIPAKKLYIGLPAAKTAAGNGYIPKQVLMSQVLPFLKGSSKYGGVMLWNRKFDVQCGYSSAIRGAV</sequence>
<evidence type="ECO:0000250" key="1"/>
<evidence type="ECO:0000255" key="2">
    <source>
        <dbReference type="PROSITE-ProRule" id="PRU01258"/>
    </source>
</evidence>
<evidence type="ECO:0000305" key="3"/>
<proteinExistence type="evidence at transcript level"/>
<accession>P29061</accession>
<keyword id="KW-0119">Carbohydrate metabolism</keyword>
<keyword id="KW-0146">Chitin degradation</keyword>
<keyword id="KW-1015">Disulfide bond</keyword>
<keyword id="KW-0326">Glycosidase</keyword>
<keyword id="KW-0378">Hydrolase</keyword>
<keyword id="KW-0624">Polysaccharide degradation</keyword>
<keyword id="KW-1185">Reference proteome</keyword>
<keyword id="KW-0732">Signal</keyword>
<comment type="function">
    <text>This protein functions as a defense against chitin containing fungal pathogens.</text>
</comment>
<comment type="catalytic activity">
    <reaction>
        <text>Random endo-hydrolysis of N-acetyl-beta-D-glucosaminide (1-&gt;4)-beta-linkages in chitin and chitodextrins.</text>
        <dbReference type="EC" id="3.2.1.14"/>
    </reaction>
</comment>
<comment type="induction">
    <text>By TMV infection.</text>
</comment>
<comment type="similarity">
    <text evidence="3">Belongs to the glycosyl hydrolase 18 family. Chitinase class II subfamily.</text>
</comment>
<dbReference type="EC" id="3.2.1.14"/>
<dbReference type="EMBL" id="Z11564">
    <property type="protein sequence ID" value="CAA77657.1"/>
    <property type="molecule type" value="mRNA"/>
</dbReference>
<dbReference type="PIR" id="S23545">
    <property type="entry name" value="S23545"/>
</dbReference>
<dbReference type="RefSeq" id="NP_001312735.1">
    <property type="nucleotide sequence ID" value="NM_001325806.1"/>
</dbReference>
<dbReference type="SMR" id="P29061"/>
<dbReference type="STRING" id="4097.P29061"/>
<dbReference type="CAZy" id="GH18">
    <property type="family name" value="Glycoside Hydrolase Family 18"/>
</dbReference>
<dbReference type="PaxDb" id="4097-P29061"/>
<dbReference type="GeneID" id="107807601"/>
<dbReference type="KEGG" id="nta:107807601"/>
<dbReference type="OMA" id="RAGIKNC"/>
<dbReference type="OrthoDB" id="6020543at2759"/>
<dbReference type="Proteomes" id="UP000084051">
    <property type="component" value="Unplaced"/>
</dbReference>
<dbReference type="GO" id="GO:0005576">
    <property type="term" value="C:extracellular region"/>
    <property type="evidence" value="ECO:0000318"/>
    <property type="project" value="GO_Central"/>
</dbReference>
<dbReference type="GO" id="GO:0008843">
    <property type="term" value="F:endochitinase activity"/>
    <property type="evidence" value="ECO:0007669"/>
    <property type="project" value="UniProtKB-EC"/>
</dbReference>
<dbReference type="GO" id="GO:0006032">
    <property type="term" value="P:chitin catabolic process"/>
    <property type="evidence" value="ECO:0007669"/>
    <property type="project" value="UniProtKB-KW"/>
</dbReference>
<dbReference type="GO" id="GO:0050832">
    <property type="term" value="P:defense response to fungus"/>
    <property type="evidence" value="ECO:0000318"/>
    <property type="project" value="GO_Central"/>
</dbReference>
<dbReference type="GO" id="GO:0000272">
    <property type="term" value="P:polysaccharide catabolic process"/>
    <property type="evidence" value="ECO:0007669"/>
    <property type="project" value="UniProtKB-KW"/>
</dbReference>
<dbReference type="CDD" id="cd02877">
    <property type="entry name" value="GH18_hevamine_XipI_class_III"/>
    <property type="match status" value="1"/>
</dbReference>
<dbReference type="FunFam" id="3.20.20.80:FF:000015">
    <property type="entry name" value="Acidic endochitinase SE2"/>
    <property type="match status" value="1"/>
</dbReference>
<dbReference type="Gene3D" id="3.20.20.80">
    <property type="entry name" value="Glycosidases"/>
    <property type="match status" value="1"/>
</dbReference>
<dbReference type="InterPro" id="IPR045321">
    <property type="entry name" value="Cts1-like"/>
</dbReference>
<dbReference type="InterPro" id="IPR001223">
    <property type="entry name" value="Glyco_hydro18_cat"/>
</dbReference>
<dbReference type="InterPro" id="IPR001579">
    <property type="entry name" value="Glyco_hydro_18_chit_AS"/>
</dbReference>
<dbReference type="InterPro" id="IPR017853">
    <property type="entry name" value="Glycoside_hydrolase_SF"/>
</dbReference>
<dbReference type="InterPro" id="IPR050542">
    <property type="entry name" value="Glycosyl_Hydrlase18_Chitinase"/>
</dbReference>
<dbReference type="PANTHER" id="PTHR45708:SF40">
    <property type="entry name" value="BASIC ENDOCHITINASE"/>
    <property type="match status" value="1"/>
</dbReference>
<dbReference type="PANTHER" id="PTHR45708">
    <property type="entry name" value="ENDOCHITINASE"/>
    <property type="match status" value="1"/>
</dbReference>
<dbReference type="Pfam" id="PF00704">
    <property type="entry name" value="Glyco_hydro_18"/>
    <property type="match status" value="1"/>
</dbReference>
<dbReference type="SUPFAM" id="SSF51445">
    <property type="entry name" value="(Trans)glycosidases"/>
    <property type="match status" value="1"/>
</dbReference>
<dbReference type="PROSITE" id="PS01095">
    <property type="entry name" value="GH18_1"/>
    <property type="match status" value="1"/>
</dbReference>
<dbReference type="PROSITE" id="PS51910">
    <property type="entry name" value="GH18_2"/>
    <property type="match status" value="1"/>
</dbReference>
<feature type="signal peptide">
    <location>
        <begin position="1"/>
        <end position="24"/>
    </location>
</feature>
<feature type="chain" id="PRO_0000011919" description="Basic endochitinase">
    <location>
        <begin position="25"/>
        <end position="294"/>
    </location>
</feature>
<feature type="domain" description="GH18" evidence="2">
    <location>
        <begin position="25"/>
        <end position="294"/>
    </location>
</feature>
<feature type="active site" description="Proton donor" evidence="2">
    <location>
        <position position="151"/>
    </location>
</feature>
<feature type="disulfide bond" evidence="1">
    <location>
        <begin position="44"/>
        <end position="91"/>
    </location>
</feature>
<feature type="disulfide bond" evidence="1">
    <location>
        <begin position="74"/>
        <end position="81"/>
    </location>
</feature>
<feature type="disulfide bond" evidence="1">
    <location>
        <begin position="182"/>
        <end position="211"/>
    </location>
</feature>
<name>CHIB_TOBAC</name>
<protein>
    <recommendedName>
        <fullName>Basic endochitinase</fullName>
        <ecNumber>3.2.1.14</ecNumber>
    </recommendedName>
</protein>
<reference key="1">
    <citation type="journal article" date="1992" name="Plant Mol. Biol.">
        <title>Acidic and basic class III chitinase mRNA accumulation in response to TMV infection of tobacco.</title>
        <authorList>
            <person name="Lawton K."/>
            <person name="Ward E."/>
            <person name="Payne G."/>
            <person name="Moyer M."/>
            <person name="Ryals J."/>
        </authorList>
    </citation>
    <scope>NUCLEOTIDE SEQUENCE [MRNA]</scope>
    <source>
        <strain>cv. Xanthi</strain>
        <tissue>Leaf</tissue>
    </source>
</reference>